<keyword id="KW-0027">Amidation</keyword>
<keyword id="KW-0903">Direct protein sequencing</keyword>
<keyword id="KW-1015">Disulfide bond</keyword>
<keyword id="KW-0872">Ion channel impairing toxin</keyword>
<keyword id="KW-0528">Neurotoxin</keyword>
<keyword id="KW-0964">Secreted</keyword>
<keyword id="KW-0800">Toxin</keyword>
<keyword id="KW-0738">Voltage-gated sodium channel impairing toxin</keyword>
<accession>P56609</accession>
<proteinExistence type="evidence at protein level"/>
<comment type="function">
    <text evidence="1">Beta toxins bind voltage-independently at site-4 of sodium channels (Nav) and shift the voltage of activation toward more negative potentials thereby affecting sodium channel activation and promoting spontaneous and repetitive firing. This toxin is active on mammals (By similarity).</text>
</comment>
<comment type="subcellular location">
    <subcellularLocation>
        <location>Secreted</location>
    </subcellularLocation>
</comment>
<comment type="tissue specificity">
    <text>Expressed by the venom gland.</text>
</comment>
<comment type="domain">
    <text evidence="4">Has the structural arrangement of an alpha-helix connected to antiparallel beta-sheets by disulfide bonds (CS-alpha/beta).</text>
</comment>
<comment type="similarity">
    <text evidence="4">Belongs to the long (4 C-C) scorpion toxin superfamily. Sodium channel inhibitor family. Beta subfamily.</text>
</comment>
<organism>
    <name type="scientific">Tityus bahiensis</name>
    <name type="common">Brazilian scorpion</name>
    <dbReference type="NCBI Taxonomy" id="50343"/>
    <lineage>
        <taxon>Eukaryota</taxon>
        <taxon>Metazoa</taxon>
        <taxon>Ecdysozoa</taxon>
        <taxon>Arthropoda</taxon>
        <taxon>Chelicerata</taxon>
        <taxon>Arachnida</taxon>
        <taxon>Scorpiones</taxon>
        <taxon>Buthida</taxon>
        <taxon>Buthoidea</taxon>
        <taxon>Buthidae</taxon>
        <taxon>Tityus</taxon>
    </lineage>
</organism>
<dbReference type="PIR" id="S62862">
    <property type="entry name" value="S62862"/>
</dbReference>
<dbReference type="SMR" id="P56609"/>
<dbReference type="GO" id="GO:0005576">
    <property type="term" value="C:extracellular region"/>
    <property type="evidence" value="ECO:0007669"/>
    <property type="project" value="UniProtKB-SubCell"/>
</dbReference>
<dbReference type="GO" id="GO:0019871">
    <property type="term" value="F:sodium channel inhibitor activity"/>
    <property type="evidence" value="ECO:0007669"/>
    <property type="project" value="InterPro"/>
</dbReference>
<dbReference type="GO" id="GO:0090729">
    <property type="term" value="F:toxin activity"/>
    <property type="evidence" value="ECO:0007669"/>
    <property type="project" value="UniProtKB-KW"/>
</dbReference>
<dbReference type="GO" id="GO:0006952">
    <property type="term" value="P:defense response"/>
    <property type="evidence" value="ECO:0007669"/>
    <property type="project" value="InterPro"/>
</dbReference>
<dbReference type="CDD" id="cd23106">
    <property type="entry name" value="neurotoxins_LC_scorpion"/>
    <property type="match status" value="1"/>
</dbReference>
<dbReference type="FunFam" id="3.30.30.10:FF:000002">
    <property type="entry name" value="Alpha-like toxin BmK-M1"/>
    <property type="match status" value="1"/>
</dbReference>
<dbReference type="Gene3D" id="3.30.30.10">
    <property type="entry name" value="Knottin, scorpion toxin-like"/>
    <property type="match status" value="1"/>
</dbReference>
<dbReference type="InterPro" id="IPR044062">
    <property type="entry name" value="LCN-type_CS_alpha_beta_dom"/>
</dbReference>
<dbReference type="InterPro" id="IPR003614">
    <property type="entry name" value="Scorpion_toxin-like"/>
</dbReference>
<dbReference type="InterPro" id="IPR036574">
    <property type="entry name" value="Scorpion_toxin-like_sf"/>
</dbReference>
<dbReference type="InterPro" id="IPR018218">
    <property type="entry name" value="Scorpion_toxinL"/>
</dbReference>
<dbReference type="InterPro" id="IPR002061">
    <property type="entry name" value="Scorpion_toxinL/defensin"/>
</dbReference>
<dbReference type="Pfam" id="PF00537">
    <property type="entry name" value="Toxin_3"/>
    <property type="match status" value="1"/>
</dbReference>
<dbReference type="PRINTS" id="PR00285">
    <property type="entry name" value="SCORPNTOXIN"/>
</dbReference>
<dbReference type="SMART" id="SM00505">
    <property type="entry name" value="Knot1"/>
    <property type="match status" value="1"/>
</dbReference>
<dbReference type="SUPFAM" id="SSF57095">
    <property type="entry name" value="Scorpion toxin-like"/>
    <property type="match status" value="1"/>
</dbReference>
<dbReference type="PROSITE" id="PS51863">
    <property type="entry name" value="LCN_CSAB"/>
    <property type="match status" value="1"/>
</dbReference>
<reference key="1">
    <citation type="journal article" date="1996" name="Biochem. J.">
        <title>Toxic peptides and genes encoding toxin gamma of the Brazilian scorpions Tityus bahiensis and Tityus stigmurus.</title>
        <authorList>
            <person name="Becerril B."/>
            <person name="Corona M."/>
            <person name="Coronas F.I."/>
            <person name="Zamudio F.Z."/>
            <person name="Calderon-Aranda E.S."/>
            <person name="Fletcher P.L. Jr."/>
            <person name="Martin B.M."/>
            <person name="Possani L.D."/>
        </authorList>
    </citation>
    <scope>PROTEIN SEQUENCE</scope>
    <source>
        <tissue>Venom</tissue>
    </source>
</reference>
<reference key="2">
    <citation type="journal article" date="2012" name="PLoS ONE">
        <title>Identification and phylogenetic analysis of Tityus pachyurus and Tityus obscurus novel putative Na+-channel scorpion toxins.</title>
        <authorList>
            <person name="Guerrero-Vargas J.A."/>
            <person name="Mourao C.B."/>
            <person name="Quintero-Hernandez V."/>
            <person name="Possani L.D."/>
            <person name="Schwartz E.F."/>
        </authorList>
    </citation>
    <scope>NOMENCLATURE</scope>
</reference>
<name>SCX2_TITBA</name>
<feature type="chain" id="PRO_0000066794" description="Toxin Tb2">
    <location>
        <begin position="1"/>
        <end position="62"/>
    </location>
</feature>
<feature type="domain" description="LCN-type CS-alpha/beta" evidence="3">
    <location>
        <begin position="1"/>
        <end position="62"/>
    </location>
</feature>
<feature type="modified residue" description="Cysteine amide" evidence="2">
    <location>
        <position position="62"/>
    </location>
</feature>
<feature type="disulfide bond" evidence="3">
    <location>
        <begin position="11"/>
        <end position="62"/>
    </location>
</feature>
<feature type="disulfide bond" evidence="3">
    <location>
        <begin position="15"/>
        <end position="38"/>
    </location>
</feature>
<feature type="disulfide bond" evidence="3">
    <location>
        <begin position="23"/>
        <end position="43"/>
    </location>
</feature>
<feature type="disulfide bond" evidence="3">
    <location>
        <begin position="27"/>
        <end position="45"/>
    </location>
</feature>
<protein>
    <recommendedName>
        <fullName>Toxin Tb2</fullName>
    </recommendedName>
    <alternativeName>
        <fullName>P-beta* NaTx5.3</fullName>
    </alternativeName>
    <alternativeName>
        <fullName>Toxin III-8</fullName>
    </alternativeName>
</protein>
<sequence length="62" mass="6931">KEGYAMDHEGCKFSCFPRPAGFCDGYCKTHLKASSGYCAWPACYCYGVPSNIKVWDYATNKC</sequence>
<evidence type="ECO:0000250" key="1"/>
<evidence type="ECO:0000250" key="2">
    <source>
        <dbReference type="UniProtKB" id="P56611"/>
    </source>
</evidence>
<evidence type="ECO:0000255" key="3">
    <source>
        <dbReference type="PROSITE-ProRule" id="PRU01210"/>
    </source>
</evidence>
<evidence type="ECO:0000305" key="4"/>